<proteinExistence type="inferred from homology"/>
<name>LUXS_SHESA</name>
<reference key="1">
    <citation type="submission" date="2006-09" db="EMBL/GenBank/DDBJ databases">
        <title>Complete sequence of chromosome 1 of Shewanella sp. ANA-3.</title>
        <authorList>
            <person name="Copeland A."/>
            <person name="Lucas S."/>
            <person name="Lapidus A."/>
            <person name="Barry K."/>
            <person name="Detter J.C."/>
            <person name="Glavina del Rio T."/>
            <person name="Hammon N."/>
            <person name="Israni S."/>
            <person name="Dalin E."/>
            <person name="Tice H."/>
            <person name="Pitluck S."/>
            <person name="Chertkov O."/>
            <person name="Brettin T."/>
            <person name="Bruce D."/>
            <person name="Han C."/>
            <person name="Tapia R."/>
            <person name="Gilna P."/>
            <person name="Schmutz J."/>
            <person name="Larimer F."/>
            <person name="Land M."/>
            <person name="Hauser L."/>
            <person name="Kyrpides N."/>
            <person name="Kim E."/>
            <person name="Newman D."/>
            <person name="Salticov C."/>
            <person name="Konstantinidis K."/>
            <person name="Klappenback J."/>
            <person name="Tiedje J."/>
            <person name="Richardson P."/>
        </authorList>
    </citation>
    <scope>NUCLEOTIDE SEQUENCE [LARGE SCALE GENOMIC DNA]</scope>
    <source>
        <strain>ANA-3</strain>
    </source>
</reference>
<comment type="function">
    <text evidence="1">Involved in the synthesis of autoinducer 2 (AI-2) which is secreted by bacteria and is used to communicate both the cell density and the metabolic potential of the environment. The regulation of gene expression in response to changes in cell density is called quorum sensing. Catalyzes the transformation of S-ribosylhomocysteine (RHC) to homocysteine (HC) and 4,5-dihydroxy-2,3-pentadione (DPD).</text>
</comment>
<comment type="catalytic activity">
    <reaction evidence="1">
        <text>S-(5-deoxy-D-ribos-5-yl)-L-homocysteine = (S)-4,5-dihydroxypentane-2,3-dione + L-homocysteine</text>
        <dbReference type="Rhea" id="RHEA:17753"/>
        <dbReference type="ChEBI" id="CHEBI:29484"/>
        <dbReference type="ChEBI" id="CHEBI:58195"/>
        <dbReference type="ChEBI" id="CHEBI:58199"/>
        <dbReference type="EC" id="4.4.1.21"/>
    </reaction>
</comment>
<comment type="cofactor">
    <cofactor evidence="1">
        <name>Fe cation</name>
        <dbReference type="ChEBI" id="CHEBI:24875"/>
    </cofactor>
    <text evidence="1">Binds 1 Fe cation per subunit.</text>
</comment>
<comment type="subunit">
    <text evidence="1">Homodimer.</text>
</comment>
<comment type="similarity">
    <text evidence="1">Belongs to the LuxS family.</text>
</comment>
<accession>A0KTQ2</accession>
<organism>
    <name type="scientific">Shewanella sp. (strain ANA-3)</name>
    <dbReference type="NCBI Taxonomy" id="94122"/>
    <lineage>
        <taxon>Bacteria</taxon>
        <taxon>Pseudomonadati</taxon>
        <taxon>Pseudomonadota</taxon>
        <taxon>Gammaproteobacteria</taxon>
        <taxon>Alteromonadales</taxon>
        <taxon>Shewanellaceae</taxon>
        <taxon>Shewanella</taxon>
    </lineage>
</organism>
<keyword id="KW-0071">Autoinducer synthesis</keyword>
<keyword id="KW-0408">Iron</keyword>
<keyword id="KW-0456">Lyase</keyword>
<keyword id="KW-0479">Metal-binding</keyword>
<keyword id="KW-0673">Quorum sensing</keyword>
<dbReference type="EC" id="4.4.1.21" evidence="1"/>
<dbReference type="EMBL" id="CP000469">
    <property type="protein sequence ID" value="ABK47171.1"/>
    <property type="molecule type" value="Genomic_DNA"/>
</dbReference>
<dbReference type="RefSeq" id="WP_011716065.1">
    <property type="nucleotide sequence ID" value="NC_008577.1"/>
</dbReference>
<dbReference type="SMR" id="A0KTQ2"/>
<dbReference type="STRING" id="94122.Shewana3_0936"/>
<dbReference type="KEGG" id="shn:Shewana3_0936"/>
<dbReference type="eggNOG" id="COG1854">
    <property type="taxonomic scope" value="Bacteria"/>
</dbReference>
<dbReference type="HOGENOM" id="CLU_107531_2_0_6"/>
<dbReference type="OrthoDB" id="9788129at2"/>
<dbReference type="Proteomes" id="UP000002589">
    <property type="component" value="Chromosome"/>
</dbReference>
<dbReference type="GO" id="GO:0005506">
    <property type="term" value="F:iron ion binding"/>
    <property type="evidence" value="ECO:0007669"/>
    <property type="project" value="InterPro"/>
</dbReference>
<dbReference type="GO" id="GO:0043768">
    <property type="term" value="F:S-ribosylhomocysteine lyase activity"/>
    <property type="evidence" value="ECO:0007669"/>
    <property type="project" value="UniProtKB-UniRule"/>
</dbReference>
<dbReference type="GO" id="GO:0009372">
    <property type="term" value="P:quorum sensing"/>
    <property type="evidence" value="ECO:0007669"/>
    <property type="project" value="UniProtKB-UniRule"/>
</dbReference>
<dbReference type="FunFam" id="3.30.1360.80:FF:000001">
    <property type="entry name" value="S-ribosylhomocysteine lyase"/>
    <property type="match status" value="1"/>
</dbReference>
<dbReference type="Gene3D" id="3.30.1360.80">
    <property type="entry name" value="S-ribosylhomocysteinase (LuxS)"/>
    <property type="match status" value="1"/>
</dbReference>
<dbReference type="HAMAP" id="MF_00091">
    <property type="entry name" value="LuxS"/>
    <property type="match status" value="1"/>
</dbReference>
<dbReference type="InterPro" id="IPR037005">
    <property type="entry name" value="LuxS_sf"/>
</dbReference>
<dbReference type="InterPro" id="IPR011249">
    <property type="entry name" value="Metalloenz_LuxS/M16"/>
</dbReference>
<dbReference type="InterPro" id="IPR003815">
    <property type="entry name" value="S-ribosylhomocysteinase"/>
</dbReference>
<dbReference type="NCBIfam" id="NF002602">
    <property type="entry name" value="PRK02260.1-2"/>
    <property type="match status" value="1"/>
</dbReference>
<dbReference type="PANTHER" id="PTHR35799">
    <property type="entry name" value="S-RIBOSYLHOMOCYSTEINE LYASE"/>
    <property type="match status" value="1"/>
</dbReference>
<dbReference type="PANTHER" id="PTHR35799:SF1">
    <property type="entry name" value="S-RIBOSYLHOMOCYSTEINE LYASE"/>
    <property type="match status" value="1"/>
</dbReference>
<dbReference type="Pfam" id="PF02664">
    <property type="entry name" value="LuxS"/>
    <property type="match status" value="1"/>
</dbReference>
<dbReference type="PIRSF" id="PIRSF006160">
    <property type="entry name" value="AI2"/>
    <property type="match status" value="1"/>
</dbReference>
<dbReference type="PRINTS" id="PR01487">
    <property type="entry name" value="LUXSPROTEIN"/>
</dbReference>
<dbReference type="SUPFAM" id="SSF63411">
    <property type="entry name" value="LuxS/MPP-like metallohydrolase"/>
    <property type="match status" value="1"/>
</dbReference>
<feature type="chain" id="PRO_0000298026" description="S-ribosylhomocysteine lyase">
    <location>
        <begin position="1"/>
        <end position="169"/>
    </location>
</feature>
<feature type="binding site" evidence="1">
    <location>
        <position position="54"/>
    </location>
    <ligand>
        <name>Fe cation</name>
        <dbReference type="ChEBI" id="CHEBI:24875"/>
    </ligand>
</feature>
<feature type="binding site" evidence="1">
    <location>
        <position position="58"/>
    </location>
    <ligand>
        <name>Fe cation</name>
        <dbReference type="ChEBI" id="CHEBI:24875"/>
    </ligand>
</feature>
<feature type="binding site" evidence="1">
    <location>
        <position position="128"/>
    </location>
    <ligand>
        <name>Fe cation</name>
        <dbReference type="ChEBI" id="CHEBI:24875"/>
    </ligand>
</feature>
<gene>
    <name evidence="1" type="primary">luxS</name>
    <name type="ordered locus">Shewana3_0936</name>
</gene>
<sequence>MPLLDSFTVDHTRMNAPAVRVAKHMSTPKGDAITVFDLRFCAPNKDILSERGIHTLEHLFAGFMRDHLNGSDVEIIDISPMGCRTGFYMSLIGEPSERQVADAWLASMEDVLKVVEQSEIPELNEYQCGTYEMHSLEQAQDIARNIIAAGVSVNRNDDLKLSDEILGQL</sequence>
<protein>
    <recommendedName>
        <fullName evidence="1">S-ribosylhomocysteine lyase</fullName>
        <ecNumber evidence="1">4.4.1.21</ecNumber>
    </recommendedName>
    <alternativeName>
        <fullName evidence="1">AI-2 synthesis protein</fullName>
    </alternativeName>
    <alternativeName>
        <fullName evidence="1">Autoinducer-2 production protein LuxS</fullName>
    </alternativeName>
</protein>
<evidence type="ECO:0000255" key="1">
    <source>
        <dbReference type="HAMAP-Rule" id="MF_00091"/>
    </source>
</evidence>